<proteinExistence type="inferred from homology"/>
<name>CUTA_SHIB3</name>
<reference key="1">
    <citation type="submission" date="2008-05" db="EMBL/GenBank/DDBJ databases">
        <title>Complete sequence of Shigella boydii serotype 18 strain BS512.</title>
        <authorList>
            <person name="Rasko D.A."/>
            <person name="Rosovitz M."/>
            <person name="Maurelli A.T."/>
            <person name="Myers G."/>
            <person name="Seshadri R."/>
            <person name="Cer R."/>
            <person name="Jiang L."/>
            <person name="Ravel J."/>
            <person name="Sebastian Y."/>
        </authorList>
    </citation>
    <scope>NUCLEOTIDE SEQUENCE [LARGE SCALE GENOMIC DNA]</scope>
    <source>
        <strain>CDC 3083-94 / BS512</strain>
    </source>
</reference>
<organism>
    <name type="scientific">Shigella boydii serotype 18 (strain CDC 3083-94 / BS512)</name>
    <dbReference type="NCBI Taxonomy" id="344609"/>
    <lineage>
        <taxon>Bacteria</taxon>
        <taxon>Pseudomonadati</taxon>
        <taxon>Pseudomonadota</taxon>
        <taxon>Gammaproteobacteria</taxon>
        <taxon>Enterobacterales</taxon>
        <taxon>Enterobacteriaceae</taxon>
        <taxon>Shigella</taxon>
    </lineage>
</organism>
<sequence>MLDEKSSNTASVVVLCTAPDEATAQDLAAKVLAEKLAACATLIPGATSLYYWEGKLEQEYEVQMILKTTVSHQQALLECLKSHHPYQTPELLVLPVTHGDTDYLSWLNASLR</sequence>
<accession>B2TY12</accession>
<dbReference type="EMBL" id="CP001063">
    <property type="protein sequence ID" value="ACD09954.1"/>
    <property type="molecule type" value="Genomic_DNA"/>
</dbReference>
<dbReference type="RefSeq" id="WP_000883400.1">
    <property type="nucleotide sequence ID" value="NC_010658.1"/>
</dbReference>
<dbReference type="SMR" id="B2TY12"/>
<dbReference type="STRING" id="344609.SbBS512_E4666"/>
<dbReference type="GeneID" id="93777687"/>
<dbReference type="KEGG" id="sbc:SbBS512_E4666"/>
<dbReference type="HOGENOM" id="CLU_098807_3_0_6"/>
<dbReference type="Proteomes" id="UP000001030">
    <property type="component" value="Chromosome"/>
</dbReference>
<dbReference type="GO" id="GO:0005737">
    <property type="term" value="C:cytoplasm"/>
    <property type="evidence" value="ECO:0007669"/>
    <property type="project" value="UniProtKB-SubCell"/>
</dbReference>
<dbReference type="GO" id="GO:0005507">
    <property type="term" value="F:copper ion binding"/>
    <property type="evidence" value="ECO:0007669"/>
    <property type="project" value="UniProtKB-UniRule"/>
</dbReference>
<dbReference type="GO" id="GO:0010038">
    <property type="term" value="P:response to metal ion"/>
    <property type="evidence" value="ECO:0007669"/>
    <property type="project" value="InterPro"/>
</dbReference>
<dbReference type="FunFam" id="3.30.70.120:FF:000004">
    <property type="entry name" value="Divalent-cation tolerance protein CutA"/>
    <property type="match status" value="1"/>
</dbReference>
<dbReference type="Gene3D" id="3.30.70.120">
    <property type="match status" value="1"/>
</dbReference>
<dbReference type="HAMAP" id="MF_01160">
    <property type="entry name" value="CutA"/>
    <property type="match status" value="1"/>
</dbReference>
<dbReference type="InterPro" id="IPR023700">
    <property type="entry name" value="CutA_Enterobact"/>
</dbReference>
<dbReference type="InterPro" id="IPR004323">
    <property type="entry name" value="Ion_tolerance_CutA"/>
</dbReference>
<dbReference type="InterPro" id="IPR011322">
    <property type="entry name" value="N-reg_PII-like_a/b"/>
</dbReference>
<dbReference type="InterPro" id="IPR015867">
    <property type="entry name" value="N-reg_PII/ATP_PRibTrfase_C"/>
</dbReference>
<dbReference type="NCBIfam" id="NF007930">
    <property type="entry name" value="PRK10645.1"/>
    <property type="match status" value="1"/>
</dbReference>
<dbReference type="PANTHER" id="PTHR23419">
    <property type="entry name" value="DIVALENT CATION TOLERANCE CUTA-RELATED"/>
    <property type="match status" value="1"/>
</dbReference>
<dbReference type="PANTHER" id="PTHR23419:SF8">
    <property type="entry name" value="FI09726P"/>
    <property type="match status" value="1"/>
</dbReference>
<dbReference type="Pfam" id="PF03091">
    <property type="entry name" value="CutA1"/>
    <property type="match status" value="1"/>
</dbReference>
<dbReference type="SUPFAM" id="SSF54913">
    <property type="entry name" value="GlnB-like"/>
    <property type="match status" value="1"/>
</dbReference>
<feature type="chain" id="PRO_1000137855" description="Divalent-cation tolerance protein CutA">
    <location>
        <begin position="1"/>
        <end position="112"/>
    </location>
</feature>
<feature type="binding site" evidence="1">
    <location>
        <position position="16"/>
    </location>
    <ligand>
        <name>Cu cation</name>
        <dbReference type="ChEBI" id="CHEBI:23378"/>
    </ligand>
</feature>
<feature type="binding site" evidence="1">
    <location>
        <position position="83"/>
    </location>
    <ligand>
        <name>Cu cation</name>
        <dbReference type="ChEBI" id="CHEBI:23378"/>
    </ligand>
</feature>
<feature type="binding site" evidence="1">
    <location>
        <position position="84"/>
    </location>
    <ligand>
        <name>Cu cation</name>
        <dbReference type="ChEBI" id="CHEBI:23378"/>
    </ligand>
</feature>
<gene>
    <name evidence="1" type="primary">cutA</name>
    <name type="ordered locus">SbBS512_E4666</name>
</gene>
<evidence type="ECO:0000255" key="1">
    <source>
        <dbReference type="HAMAP-Rule" id="MF_01160"/>
    </source>
</evidence>
<keyword id="KW-0186">Copper</keyword>
<keyword id="KW-0963">Cytoplasm</keyword>
<keyword id="KW-0479">Metal-binding</keyword>
<keyword id="KW-1185">Reference proteome</keyword>
<protein>
    <recommendedName>
        <fullName evidence="1">Divalent-cation tolerance protein CutA</fullName>
    </recommendedName>
</protein>
<comment type="function">
    <text evidence="1">Involved in resistance toward heavy metals.</text>
</comment>
<comment type="cofactor">
    <cofactor evidence="1">
        <name>Cu cation</name>
        <dbReference type="ChEBI" id="CHEBI:23378"/>
    </cofactor>
    <text evidence="1">Binds 1 copper ion per subunit.</text>
</comment>
<comment type="subunit">
    <text evidence="1">Homotrimer.</text>
</comment>
<comment type="subcellular location">
    <subcellularLocation>
        <location evidence="1">Cytoplasm</location>
    </subcellularLocation>
</comment>
<comment type="similarity">
    <text evidence="1">Belongs to the CutA family.</text>
</comment>